<dbReference type="EC" id="4.2.1.-" evidence="1"/>
<dbReference type="EMBL" id="AL939108">
    <property type="protein sequence ID" value="CAB61679.1"/>
    <property type="molecule type" value="Genomic_DNA"/>
</dbReference>
<dbReference type="RefSeq" id="NP_625694.1">
    <property type="nucleotide sequence ID" value="NC_003888.3"/>
</dbReference>
<dbReference type="RefSeq" id="WP_011027775.1">
    <property type="nucleotide sequence ID" value="NZ_VNID01000029.1"/>
</dbReference>
<dbReference type="SMR" id="Q9RKX1"/>
<dbReference type="STRING" id="100226.gene:17758998"/>
<dbReference type="PaxDb" id="100226-SCO1412"/>
<dbReference type="KEGG" id="sco:SCO1412"/>
<dbReference type="PATRIC" id="fig|100226.15.peg.1422"/>
<dbReference type="eggNOG" id="COG4336">
    <property type="taxonomic scope" value="Bacteria"/>
</dbReference>
<dbReference type="HOGENOM" id="CLU_059759_0_0_11"/>
<dbReference type="InParanoid" id="Q9RKX1"/>
<dbReference type="OrthoDB" id="149585at2"/>
<dbReference type="PhylomeDB" id="Q9RKX1"/>
<dbReference type="Proteomes" id="UP000001973">
    <property type="component" value="Chromosome"/>
</dbReference>
<dbReference type="GO" id="GO:0016829">
    <property type="term" value="F:lyase activity"/>
    <property type="evidence" value="ECO:0007669"/>
    <property type="project" value="UniProtKB-KW"/>
</dbReference>
<dbReference type="FunFam" id="3.30.2040.10:FF:000001">
    <property type="entry name" value="D-glutamate cyclase, mitochondrial"/>
    <property type="match status" value="1"/>
</dbReference>
<dbReference type="Gene3D" id="3.40.1640.10">
    <property type="entry name" value="PSTPO5379-like"/>
    <property type="match status" value="1"/>
</dbReference>
<dbReference type="Gene3D" id="3.30.2040.10">
    <property type="entry name" value="PSTPO5379-like domain"/>
    <property type="match status" value="1"/>
</dbReference>
<dbReference type="HAMAP" id="MF_01830">
    <property type="entry name" value="Hydro_lyase"/>
    <property type="match status" value="1"/>
</dbReference>
<dbReference type="InterPro" id="IPR009906">
    <property type="entry name" value="D-Glu_cyclase"/>
</dbReference>
<dbReference type="InterPro" id="IPR038021">
    <property type="entry name" value="Putative_hydro-lyase"/>
</dbReference>
<dbReference type="InterPro" id="IPR016938">
    <property type="entry name" value="UPF0317"/>
</dbReference>
<dbReference type="NCBIfam" id="NF003969">
    <property type="entry name" value="PRK05463.1"/>
    <property type="match status" value="1"/>
</dbReference>
<dbReference type="PANTHER" id="PTHR32022">
    <property type="entry name" value="D-GLUTAMATE CYCLASE, MITOCHONDRIAL"/>
    <property type="match status" value="1"/>
</dbReference>
<dbReference type="PANTHER" id="PTHR32022:SF10">
    <property type="entry name" value="D-GLUTAMATE CYCLASE, MITOCHONDRIAL"/>
    <property type="match status" value="1"/>
</dbReference>
<dbReference type="Pfam" id="PF07286">
    <property type="entry name" value="D-Glu_cyclase"/>
    <property type="match status" value="1"/>
</dbReference>
<dbReference type="PIRSF" id="PIRSF029755">
    <property type="entry name" value="UCP029755"/>
    <property type="match status" value="1"/>
</dbReference>
<dbReference type="SUPFAM" id="SSF160920">
    <property type="entry name" value="PSTPO5379-like"/>
    <property type="match status" value="1"/>
</dbReference>
<feature type="chain" id="PRO_0000217173" description="Putative hydro-lyase SCO1412">
    <location>
        <begin position="1"/>
        <end position="277"/>
    </location>
</feature>
<protein>
    <recommendedName>
        <fullName evidence="1">Putative hydro-lyase SCO1412</fullName>
        <ecNumber evidence="1">4.2.1.-</ecNumber>
    </recommendedName>
</protein>
<reference key="1">
    <citation type="journal article" date="2002" name="Nature">
        <title>Complete genome sequence of the model actinomycete Streptomyces coelicolor A3(2).</title>
        <authorList>
            <person name="Bentley S.D."/>
            <person name="Chater K.F."/>
            <person name="Cerdeno-Tarraga A.-M."/>
            <person name="Challis G.L."/>
            <person name="Thomson N.R."/>
            <person name="James K.D."/>
            <person name="Harris D.E."/>
            <person name="Quail M.A."/>
            <person name="Kieser H."/>
            <person name="Harper D."/>
            <person name="Bateman A."/>
            <person name="Brown S."/>
            <person name="Chandra G."/>
            <person name="Chen C.W."/>
            <person name="Collins M."/>
            <person name="Cronin A."/>
            <person name="Fraser A."/>
            <person name="Goble A."/>
            <person name="Hidalgo J."/>
            <person name="Hornsby T."/>
            <person name="Howarth S."/>
            <person name="Huang C.-H."/>
            <person name="Kieser T."/>
            <person name="Larke L."/>
            <person name="Murphy L.D."/>
            <person name="Oliver K."/>
            <person name="O'Neil S."/>
            <person name="Rabbinowitsch E."/>
            <person name="Rajandream M.A."/>
            <person name="Rutherford K.M."/>
            <person name="Rutter S."/>
            <person name="Seeger K."/>
            <person name="Saunders D."/>
            <person name="Sharp S."/>
            <person name="Squares R."/>
            <person name="Squares S."/>
            <person name="Taylor K."/>
            <person name="Warren T."/>
            <person name="Wietzorrek A."/>
            <person name="Woodward J.R."/>
            <person name="Barrell B.G."/>
            <person name="Parkhill J."/>
            <person name="Hopwood D.A."/>
        </authorList>
    </citation>
    <scope>NUCLEOTIDE SEQUENCE [LARGE SCALE GENOMIC DNA]</scope>
    <source>
        <strain>ATCC BAA-471 / A3(2) / M145</strain>
    </source>
</reference>
<proteinExistence type="inferred from homology"/>
<gene>
    <name type="ordered locus">SCO1412</name>
    <name type="ORF">SC6D7.27c</name>
</gene>
<keyword id="KW-0456">Lyase</keyword>
<keyword id="KW-1185">Reference proteome</keyword>
<sequence>MNRPHSATGDRPLALVDEHAHAWSPKTARARFRKGLTGPTAGVAAGHTQANLISVPADWAYDMLLFCTRNPQPCPVLDVTDAGSWTTVLADGADLRTDLPRYRVWRDGELVDEPSDVREHWRDDLVTFLIGCSFTFEWALAAAGVPIRHVEQGRNVPMYVTSRACRPAGRLRGPMVVSMRPVPPAHLSAAIHESSLLPAVHGSPVHCGDPSALGIDDLDRPDFGEAVYREPDDIPVFWACGVTPQAAVMASRPPFALTHAPGQMFLTDARDEQYRVA</sequence>
<organism>
    <name type="scientific">Streptomyces coelicolor (strain ATCC BAA-471 / A3(2) / M145)</name>
    <dbReference type="NCBI Taxonomy" id="100226"/>
    <lineage>
        <taxon>Bacteria</taxon>
        <taxon>Bacillati</taxon>
        <taxon>Actinomycetota</taxon>
        <taxon>Actinomycetes</taxon>
        <taxon>Kitasatosporales</taxon>
        <taxon>Streptomycetaceae</taxon>
        <taxon>Streptomyces</taxon>
        <taxon>Streptomyces albidoflavus group</taxon>
    </lineage>
</organism>
<name>Y1412_STRCO</name>
<comment type="similarity">
    <text evidence="1">Belongs to the D-glutamate cyclase family.</text>
</comment>
<accession>Q9RKX1</accession>
<evidence type="ECO:0000255" key="1">
    <source>
        <dbReference type="HAMAP-Rule" id="MF_01830"/>
    </source>
</evidence>